<feature type="chain" id="PRO_0000129939" description="Small ribosomal subunit protein uS19">
    <location>
        <begin position="1"/>
        <end position="92"/>
    </location>
</feature>
<dbReference type="EMBL" id="BA000037">
    <property type="protein sequence ID" value="BAC93143.1"/>
    <property type="molecule type" value="Genomic_DNA"/>
</dbReference>
<dbReference type="RefSeq" id="WP_011078827.1">
    <property type="nucleotide sequence ID" value="NC_005139.1"/>
</dbReference>
<dbReference type="SMR" id="Q7MPI4"/>
<dbReference type="STRING" id="672.VV93_v1c03500"/>
<dbReference type="GeneID" id="95678951"/>
<dbReference type="KEGG" id="vvy:VV0379"/>
<dbReference type="eggNOG" id="COG0185">
    <property type="taxonomic scope" value="Bacteria"/>
</dbReference>
<dbReference type="HOGENOM" id="CLU_144911_0_1_6"/>
<dbReference type="Proteomes" id="UP000002675">
    <property type="component" value="Chromosome I"/>
</dbReference>
<dbReference type="GO" id="GO:0005737">
    <property type="term" value="C:cytoplasm"/>
    <property type="evidence" value="ECO:0007669"/>
    <property type="project" value="UniProtKB-ARBA"/>
</dbReference>
<dbReference type="GO" id="GO:0015935">
    <property type="term" value="C:small ribosomal subunit"/>
    <property type="evidence" value="ECO:0007669"/>
    <property type="project" value="InterPro"/>
</dbReference>
<dbReference type="GO" id="GO:0019843">
    <property type="term" value="F:rRNA binding"/>
    <property type="evidence" value="ECO:0007669"/>
    <property type="project" value="UniProtKB-UniRule"/>
</dbReference>
<dbReference type="GO" id="GO:0003735">
    <property type="term" value="F:structural constituent of ribosome"/>
    <property type="evidence" value="ECO:0007669"/>
    <property type="project" value="InterPro"/>
</dbReference>
<dbReference type="GO" id="GO:0000028">
    <property type="term" value="P:ribosomal small subunit assembly"/>
    <property type="evidence" value="ECO:0007669"/>
    <property type="project" value="TreeGrafter"/>
</dbReference>
<dbReference type="GO" id="GO:0006412">
    <property type="term" value="P:translation"/>
    <property type="evidence" value="ECO:0007669"/>
    <property type="project" value="UniProtKB-UniRule"/>
</dbReference>
<dbReference type="FunFam" id="3.30.860.10:FF:000001">
    <property type="entry name" value="30S ribosomal protein S19"/>
    <property type="match status" value="1"/>
</dbReference>
<dbReference type="Gene3D" id="3.30.860.10">
    <property type="entry name" value="30s Ribosomal Protein S19, Chain A"/>
    <property type="match status" value="1"/>
</dbReference>
<dbReference type="HAMAP" id="MF_00531">
    <property type="entry name" value="Ribosomal_uS19"/>
    <property type="match status" value="1"/>
</dbReference>
<dbReference type="InterPro" id="IPR002222">
    <property type="entry name" value="Ribosomal_uS19"/>
</dbReference>
<dbReference type="InterPro" id="IPR005732">
    <property type="entry name" value="Ribosomal_uS19_bac-type"/>
</dbReference>
<dbReference type="InterPro" id="IPR020934">
    <property type="entry name" value="Ribosomal_uS19_CS"/>
</dbReference>
<dbReference type="InterPro" id="IPR023575">
    <property type="entry name" value="Ribosomal_uS19_SF"/>
</dbReference>
<dbReference type="NCBIfam" id="TIGR01050">
    <property type="entry name" value="rpsS_bact"/>
    <property type="match status" value="1"/>
</dbReference>
<dbReference type="PANTHER" id="PTHR11880">
    <property type="entry name" value="RIBOSOMAL PROTEIN S19P FAMILY MEMBER"/>
    <property type="match status" value="1"/>
</dbReference>
<dbReference type="PANTHER" id="PTHR11880:SF8">
    <property type="entry name" value="SMALL RIBOSOMAL SUBUNIT PROTEIN US19M"/>
    <property type="match status" value="1"/>
</dbReference>
<dbReference type="Pfam" id="PF00203">
    <property type="entry name" value="Ribosomal_S19"/>
    <property type="match status" value="1"/>
</dbReference>
<dbReference type="PIRSF" id="PIRSF002144">
    <property type="entry name" value="Ribosomal_S19"/>
    <property type="match status" value="1"/>
</dbReference>
<dbReference type="PRINTS" id="PR00975">
    <property type="entry name" value="RIBOSOMALS19"/>
</dbReference>
<dbReference type="SUPFAM" id="SSF54570">
    <property type="entry name" value="Ribosomal protein S19"/>
    <property type="match status" value="1"/>
</dbReference>
<dbReference type="PROSITE" id="PS00323">
    <property type="entry name" value="RIBOSOMAL_S19"/>
    <property type="match status" value="1"/>
</dbReference>
<name>RS19_VIBVY</name>
<accession>Q7MPI4</accession>
<comment type="function">
    <text evidence="1">Protein S19 forms a complex with S13 that binds strongly to the 16S ribosomal RNA.</text>
</comment>
<comment type="similarity">
    <text evidence="1">Belongs to the universal ribosomal protein uS19 family.</text>
</comment>
<sequence>MPRSLKKGPFIDLHLLKKVEKAVESGDKKPLKTWSRRSMIIPTMIGLTIAVHNGRQHVPVFVTEEMIGHKLGEFAPTRTYRGHAADKKAKKR</sequence>
<keyword id="KW-0687">Ribonucleoprotein</keyword>
<keyword id="KW-0689">Ribosomal protein</keyword>
<keyword id="KW-0694">RNA-binding</keyword>
<keyword id="KW-0699">rRNA-binding</keyword>
<reference key="1">
    <citation type="journal article" date="2003" name="Genome Res.">
        <title>Comparative genome analysis of Vibrio vulnificus, a marine pathogen.</title>
        <authorList>
            <person name="Chen C.-Y."/>
            <person name="Wu K.-M."/>
            <person name="Chang Y.-C."/>
            <person name="Chang C.-H."/>
            <person name="Tsai H.-C."/>
            <person name="Liao T.-L."/>
            <person name="Liu Y.-M."/>
            <person name="Chen H.-J."/>
            <person name="Shen A.B.-T."/>
            <person name="Li J.-C."/>
            <person name="Su T.-L."/>
            <person name="Shao C.-P."/>
            <person name="Lee C.-T."/>
            <person name="Hor L.-I."/>
            <person name="Tsai S.-F."/>
        </authorList>
    </citation>
    <scope>NUCLEOTIDE SEQUENCE [LARGE SCALE GENOMIC DNA]</scope>
    <source>
        <strain>YJ016</strain>
    </source>
</reference>
<organism>
    <name type="scientific">Vibrio vulnificus (strain YJ016)</name>
    <dbReference type="NCBI Taxonomy" id="196600"/>
    <lineage>
        <taxon>Bacteria</taxon>
        <taxon>Pseudomonadati</taxon>
        <taxon>Pseudomonadota</taxon>
        <taxon>Gammaproteobacteria</taxon>
        <taxon>Vibrionales</taxon>
        <taxon>Vibrionaceae</taxon>
        <taxon>Vibrio</taxon>
    </lineage>
</organism>
<gene>
    <name evidence="1" type="primary">rpsS</name>
    <name type="ordered locus">VV0379</name>
</gene>
<protein>
    <recommendedName>
        <fullName evidence="1">Small ribosomal subunit protein uS19</fullName>
    </recommendedName>
    <alternativeName>
        <fullName evidence="2">30S ribosomal protein S19</fullName>
    </alternativeName>
</protein>
<proteinExistence type="inferred from homology"/>
<evidence type="ECO:0000255" key="1">
    <source>
        <dbReference type="HAMAP-Rule" id="MF_00531"/>
    </source>
</evidence>
<evidence type="ECO:0000305" key="2"/>